<keyword id="KW-0963">Cytoplasm</keyword>
<keyword id="KW-0251">Elongation factor</keyword>
<keyword id="KW-0342">GTP-binding</keyword>
<keyword id="KW-0378">Hydrolase</keyword>
<keyword id="KW-0460">Magnesium</keyword>
<keyword id="KW-0479">Metal-binding</keyword>
<keyword id="KW-0547">Nucleotide-binding</keyword>
<keyword id="KW-0648">Protein biosynthesis</keyword>
<keyword id="KW-1185">Reference proteome</keyword>
<dbReference type="EC" id="3.6.5.3" evidence="2"/>
<dbReference type="EMBL" id="CP000454">
    <property type="protein sequence ID" value="ABK04358.1"/>
    <property type="molecule type" value="Genomic_DNA"/>
</dbReference>
<dbReference type="RefSeq" id="WP_003803827.1">
    <property type="nucleotide sequence ID" value="NC_008541.1"/>
</dbReference>
<dbReference type="SMR" id="A0JZ88"/>
<dbReference type="STRING" id="290399.Arth_2979"/>
<dbReference type="KEGG" id="art:Arth_2979"/>
<dbReference type="eggNOG" id="COG0050">
    <property type="taxonomic scope" value="Bacteria"/>
</dbReference>
<dbReference type="HOGENOM" id="CLU_007265_0_1_11"/>
<dbReference type="OrthoDB" id="9803139at2"/>
<dbReference type="Proteomes" id="UP000000754">
    <property type="component" value="Chromosome"/>
</dbReference>
<dbReference type="GO" id="GO:0005829">
    <property type="term" value="C:cytosol"/>
    <property type="evidence" value="ECO:0007669"/>
    <property type="project" value="TreeGrafter"/>
</dbReference>
<dbReference type="GO" id="GO:0005525">
    <property type="term" value="F:GTP binding"/>
    <property type="evidence" value="ECO:0007669"/>
    <property type="project" value="UniProtKB-UniRule"/>
</dbReference>
<dbReference type="GO" id="GO:0003924">
    <property type="term" value="F:GTPase activity"/>
    <property type="evidence" value="ECO:0007669"/>
    <property type="project" value="InterPro"/>
</dbReference>
<dbReference type="GO" id="GO:0003746">
    <property type="term" value="F:translation elongation factor activity"/>
    <property type="evidence" value="ECO:0007669"/>
    <property type="project" value="UniProtKB-UniRule"/>
</dbReference>
<dbReference type="CDD" id="cd01884">
    <property type="entry name" value="EF_Tu"/>
    <property type="match status" value="1"/>
</dbReference>
<dbReference type="CDD" id="cd03697">
    <property type="entry name" value="EFTU_II"/>
    <property type="match status" value="1"/>
</dbReference>
<dbReference type="CDD" id="cd03707">
    <property type="entry name" value="EFTU_III"/>
    <property type="match status" value="1"/>
</dbReference>
<dbReference type="FunFam" id="2.40.30.10:FF:000001">
    <property type="entry name" value="Elongation factor Tu"/>
    <property type="match status" value="1"/>
</dbReference>
<dbReference type="FunFam" id="3.40.50.300:FF:000003">
    <property type="entry name" value="Elongation factor Tu"/>
    <property type="match status" value="1"/>
</dbReference>
<dbReference type="Gene3D" id="3.40.50.300">
    <property type="entry name" value="P-loop containing nucleotide triphosphate hydrolases"/>
    <property type="match status" value="1"/>
</dbReference>
<dbReference type="Gene3D" id="2.40.30.10">
    <property type="entry name" value="Translation factors"/>
    <property type="match status" value="2"/>
</dbReference>
<dbReference type="HAMAP" id="MF_00118_B">
    <property type="entry name" value="EF_Tu_B"/>
    <property type="match status" value="1"/>
</dbReference>
<dbReference type="InterPro" id="IPR041709">
    <property type="entry name" value="EF-Tu_GTP-bd"/>
</dbReference>
<dbReference type="InterPro" id="IPR050055">
    <property type="entry name" value="EF-Tu_GTPase"/>
</dbReference>
<dbReference type="InterPro" id="IPR004161">
    <property type="entry name" value="EFTu-like_2"/>
</dbReference>
<dbReference type="InterPro" id="IPR033720">
    <property type="entry name" value="EFTU_2"/>
</dbReference>
<dbReference type="InterPro" id="IPR031157">
    <property type="entry name" value="G_TR_CS"/>
</dbReference>
<dbReference type="InterPro" id="IPR027417">
    <property type="entry name" value="P-loop_NTPase"/>
</dbReference>
<dbReference type="InterPro" id="IPR005225">
    <property type="entry name" value="Small_GTP-bd"/>
</dbReference>
<dbReference type="InterPro" id="IPR000795">
    <property type="entry name" value="T_Tr_GTP-bd_dom"/>
</dbReference>
<dbReference type="InterPro" id="IPR009000">
    <property type="entry name" value="Transl_B-barrel_sf"/>
</dbReference>
<dbReference type="InterPro" id="IPR009001">
    <property type="entry name" value="Transl_elong_EF1A/Init_IF2_C"/>
</dbReference>
<dbReference type="InterPro" id="IPR004541">
    <property type="entry name" value="Transl_elong_EFTu/EF1A_bac/org"/>
</dbReference>
<dbReference type="InterPro" id="IPR004160">
    <property type="entry name" value="Transl_elong_EFTu/EF1A_C"/>
</dbReference>
<dbReference type="NCBIfam" id="TIGR00485">
    <property type="entry name" value="EF-Tu"/>
    <property type="match status" value="1"/>
</dbReference>
<dbReference type="NCBIfam" id="NF000766">
    <property type="entry name" value="PRK00049.1"/>
    <property type="match status" value="1"/>
</dbReference>
<dbReference type="NCBIfam" id="NF009372">
    <property type="entry name" value="PRK12735.1"/>
    <property type="match status" value="1"/>
</dbReference>
<dbReference type="NCBIfam" id="NF009373">
    <property type="entry name" value="PRK12736.1"/>
    <property type="match status" value="1"/>
</dbReference>
<dbReference type="NCBIfam" id="TIGR00231">
    <property type="entry name" value="small_GTP"/>
    <property type="match status" value="1"/>
</dbReference>
<dbReference type="PANTHER" id="PTHR43721:SF22">
    <property type="entry name" value="ELONGATION FACTOR TU, MITOCHONDRIAL"/>
    <property type="match status" value="1"/>
</dbReference>
<dbReference type="PANTHER" id="PTHR43721">
    <property type="entry name" value="ELONGATION FACTOR TU-RELATED"/>
    <property type="match status" value="1"/>
</dbReference>
<dbReference type="Pfam" id="PF00009">
    <property type="entry name" value="GTP_EFTU"/>
    <property type="match status" value="1"/>
</dbReference>
<dbReference type="Pfam" id="PF03144">
    <property type="entry name" value="GTP_EFTU_D2"/>
    <property type="match status" value="1"/>
</dbReference>
<dbReference type="Pfam" id="PF03143">
    <property type="entry name" value="GTP_EFTU_D3"/>
    <property type="match status" value="1"/>
</dbReference>
<dbReference type="PRINTS" id="PR00315">
    <property type="entry name" value="ELONGATNFCT"/>
</dbReference>
<dbReference type="SUPFAM" id="SSF50465">
    <property type="entry name" value="EF-Tu/eEF-1alpha/eIF2-gamma C-terminal domain"/>
    <property type="match status" value="1"/>
</dbReference>
<dbReference type="SUPFAM" id="SSF52540">
    <property type="entry name" value="P-loop containing nucleoside triphosphate hydrolases"/>
    <property type="match status" value="1"/>
</dbReference>
<dbReference type="SUPFAM" id="SSF50447">
    <property type="entry name" value="Translation proteins"/>
    <property type="match status" value="1"/>
</dbReference>
<dbReference type="PROSITE" id="PS00301">
    <property type="entry name" value="G_TR_1"/>
    <property type="match status" value="1"/>
</dbReference>
<dbReference type="PROSITE" id="PS51722">
    <property type="entry name" value="G_TR_2"/>
    <property type="match status" value="1"/>
</dbReference>
<accession>A0JZ88</accession>
<comment type="function">
    <text evidence="2">GTP hydrolase that promotes the GTP-dependent binding of aminoacyl-tRNA to the A-site of ribosomes during protein biosynthesis.</text>
</comment>
<comment type="catalytic activity">
    <reaction evidence="2">
        <text>GTP + H2O = GDP + phosphate + H(+)</text>
        <dbReference type="Rhea" id="RHEA:19669"/>
        <dbReference type="ChEBI" id="CHEBI:15377"/>
        <dbReference type="ChEBI" id="CHEBI:15378"/>
        <dbReference type="ChEBI" id="CHEBI:37565"/>
        <dbReference type="ChEBI" id="CHEBI:43474"/>
        <dbReference type="ChEBI" id="CHEBI:58189"/>
        <dbReference type="EC" id="3.6.5.3"/>
    </reaction>
    <physiologicalReaction direction="left-to-right" evidence="2">
        <dbReference type="Rhea" id="RHEA:19670"/>
    </physiologicalReaction>
</comment>
<comment type="subunit">
    <text evidence="2">Monomer.</text>
</comment>
<comment type="subcellular location">
    <subcellularLocation>
        <location evidence="2">Cytoplasm</location>
    </subcellularLocation>
</comment>
<comment type="similarity">
    <text evidence="2">Belongs to the TRAFAC class translation factor GTPase superfamily. Classic translation factor GTPase family. EF-Tu/EF-1A subfamily.</text>
</comment>
<organism>
    <name type="scientific">Arthrobacter sp. (strain FB24)</name>
    <dbReference type="NCBI Taxonomy" id="290399"/>
    <lineage>
        <taxon>Bacteria</taxon>
        <taxon>Bacillati</taxon>
        <taxon>Actinomycetota</taxon>
        <taxon>Actinomycetes</taxon>
        <taxon>Micrococcales</taxon>
        <taxon>Micrococcaceae</taxon>
        <taxon>Arthrobacter</taxon>
    </lineage>
</organism>
<proteinExistence type="inferred from homology"/>
<protein>
    <recommendedName>
        <fullName evidence="2">Elongation factor Tu</fullName>
        <shortName evidence="2">EF-Tu</shortName>
        <ecNumber evidence="2">3.6.5.3</ecNumber>
    </recommendedName>
</protein>
<feature type="chain" id="PRO_1000015601" description="Elongation factor Tu">
    <location>
        <begin position="1"/>
        <end position="396"/>
    </location>
</feature>
<feature type="domain" description="tr-type G">
    <location>
        <begin position="10"/>
        <end position="206"/>
    </location>
</feature>
<feature type="region of interest" description="G1" evidence="1">
    <location>
        <begin position="19"/>
        <end position="26"/>
    </location>
</feature>
<feature type="region of interest" description="G2" evidence="1">
    <location>
        <begin position="62"/>
        <end position="66"/>
    </location>
</feature>
<feature type="region of interest" description="G3" evidence="1">
    <location>
        <begin position="83"/>
        <end position="86"/>
    </location>
</feature>
<feature type="region of interest" description="G4" evidence="1">
    <location>
        <begin position="138"/>
        <end position="141"/>
    </location>
</feature>
<feature type="region of interest" description="G5" evidence="1">
    <location>
        <begin position="176"/>
        <end position="178"/>
    </location>
</feature>
<feature type="binding site" evidence="2">
    <location>
        <begin position="19"/>
        <end position="26"/>
    </location>
    <ligand>
        <name>GTP</name>
        <dbReference type="ChEBI" id="CHEBI:37565"/>
    </ligand>
</feature>
<feature type="binding site" evidence="2">
    <location>
        <position position="26"/>
    </location>
    <ligand>
        <name>Mg(2+)</name>
        <dbReference type="ChEBI" id="CHEBI:18420"/>
    </ligand>
</feature>
<feature type="binding site" evidence="2">
    <location>
        <begin position="83"/>
        <end position="87"/>
    </location>
    <ligand>
        <name>GTP</name>
        <dbReference type="ChEBI" id="CHEBI:37565"/>
    </ligand>
</feature>
<feature type="binding site" evidence="2">
    <location>
        <begin position="138"/>
        <end position="141"/>
    </location>
    <ligand>
        <name>GTP</name>
        <dbReference type="ChEBI" id="CHEBI:37565"/>
    </ligand>
</feature>
<sequence>MAKAKFERTKPHVNIGTIGHVDHGKTTLTAAISKVLYDKYPTLNEKRDFASIDSAPEERQRGITINISHVEYQTEKRHYAHVDAPGHADYIKNMITGAAQMDGAILVVAATDGPMAQTREHVLLARQVGVPYLLVALNKADMVDDEELLDLVEMEVRELLSSQGFDGDEAPVVRVSGLKALEGDPEWVKSVEDLMAAVDESVPDPVRDRDKPFLMPIEDVFTITGRGTVVTGRAERGTLAINSEVEIVGIRPVQKTTVTGIEMFHKQLDEAWAGENCGLLLRGLKRDDVERGQVVVKPGSITPHTDFEANVYILSKDEGGRHNPFYSNYRPQFYFRTTDVTGVITLPEGTEMVMPGDNTEMTVALIQPIAMEEGLGFAIREGGRTVGSGRVTKIIK</sequence>
<evidence type="ECO:0000250" key="1"/>
<evidence type="ECO:0000255" key="2">
    <source>
        <dbReference type="HAMAP-Rule" id="MF_00118"/>
    </source>
</evidence>
<reference key="1">
    <citation type="journal article" date="2013" name="Stand. Genomic Sci.">
        <title>Complete genome sequence of Arthrobacter sp. strain FB24.</title>
        <authorList>
            <person name="Nakatsu C.H."/>
            <person name="Barabote R."/>
            <person name="Thompson S."/>
            <person name="Bruce D."/>
            <person name="Detter C."/>
            <person name="Brettin T."/>
            <person name="Han C."/>
            <person name="Beasley F."/>
            <person name="Chen W."/>
            <person name="Konopka A."/>
            <person name="Xie G."/>
        </authorList>
    </citation>
    <scope>NUCLEOTIDE SEQUENCE [LARGE SCALE GENOMIC DNA]</scope>
    <source>
        <strain>FB24</strain>
    </source>
</reference>
<name>EFTU_ARTS2</name>
<gene>
    <name evidence="2" type="primary">tuf</name>
    <name type="ordered locus">Arth_2979</name>
</gene>